<gene>
    <name evidence="1" type="primary">hisS</name>
    <name type="ordered locus">LS215_1962</name>
</gene>
<evidence type="ECO:0000255" key="1">
    <source>
        <dbReference type="HAMAP-Rule" id="MF_00127"/>
    </source>
</evidence>
<sequence>MTKFETVRGMKDYIGIDAEKIRYLESTFRDLAIKYGYSEIITPVVEEFKLFALKGGEELRETMYVFKDKADRELSLRPEITPSVARAYIQNLQSSPKPIRLFYFGTVYRYDEPQYGRYREFRQAGIEMIGDSSILADLEVLDLLYNFYDKLNLSNDITIKINNIGIFRKIMDKYNIEDNLQEHILHLIDKNKINEALDILEKNLKNKDIIDFFNKILTKKDTKLEDIESLAELEEVSRLDIKSEFLYLFRLSRILSNLNIKFKIDLGFVRGLAYYTGLIFEVLHPSVQFSIAGGGRYDKLIELYGGLPSPAIGFAIGVERTLLVIKDLKVEEPVNVIVIGMSEDTIPSMFMVSRILRKEEYKVVINTKDQPLSKLLPYYASQGFKVAIIIGKQELEKNMITVRNLITRKQISVPLENIEDAIKQTL</sequence>
<accession>C3MRE4</accession>
<name>SYH_SACI2</name>
<comment type="catalytic activity">
    <reaction evidence="1">
        <text>tRNA(His) + L-histidine + ATP = L-histidyl-tRNA(His) + AMP + diphosphate + H(+)</text>
        <dbReference type="Rhea" id="RHEA:17313"/>
        <dbReference type="Rhea" id="RHEA-COMP:9665"/>
        <dbReference type="Rhea" id="RHEA-COMP:9689"/>
        <dbReference type="ChEBI" id="CHEBI:15378"/>
        <dbReference type="ChEBI" id="CHEBI:30616"/>
        <dbReference type="ChEBI" id="CHEBI:33019"/>
        <dbReference type="ChEBI" id="CHEBI:57595"/>
        <dbReference type="ChEBI" id="CHEBI:78442"/>
        <dbReference type="ChEBI" id="CHEBI:78527"/>
        <dbReference type="ChEBI" id="CHEBI:456215"/>
        <dbReference type="EC" id="6.1.1.21"/>
    </reaction>
</comment>
<comment type="subcellular location">
    <subcellularLocation>
        <location evidence="1">Cytoplasm</location>
    </subcellularLocation>
</comment>
<comment type="similarity">
    <text evidence="1">Belongs to the class-II aminoacyl-tRNA synthetase family.</text>
</comment>
<dbReference type="EC" id="6.1.1.21" evidence="1"/>
<dbReference type="EMBL" id="CP001399">
    <property type="protein sequence ID" value="ACP35957.1"/>
    <property type="molecule type" value="Genomic_DNA"/>
</dbReference>
<dbReference type="RefSeq" id="WP_012711827.1">
    <property type="nucleotide sequence ID" value="NC_012589.1"/>
</dbReference>
<dbReference type="SMR" id="C3MRE4"/>
<dbReference type="GeneID" id="84053416"/>
<dbReference type="KEGG" id="sis:LS215_1962"/>
<dbReference type="HOGENOM" id="CLU_025113_3_1_2"/>
<dbReference type="OrthoDB" id="8659at2157"/>
<dbReference type="Proteomes" id="UP000001747">
    <property type="component" value="Chromosome"/>
</dbReference>
<dbReference type="GO" id="GO:0005737">
    <property type="term" value="C:cytoplasm"/>
    <property type="evidence" value="ECO:0007669"/>
    <property type="project" value="UniProtKB-SubCell"/>
</dbReference>
<dbReference type="GO" id="GO:0005524">
    <property type="term" value="F:ATP binding"/>
    <property type="evidence" value="ECO:0007669"/>
    <property type="project" value="UniProtKB-UniRule"/>
</dbReference>
<dbReference type="GO" id="GO:0004821">
    <property type="term" value="F:histidine-tRNA ligase activity"/>
    <property type="evidence" value="ECO:0007669"/>
    <property type="project" value="UniProtKB-UniRule"/>
</dbReference>
<dbReference type="GO" id="GO:0006427">
    <property type="term" value="P:histidyl-tRNA aminoacylation"/>
    <property type="evidence" value="ECO:0007669"/>
    <property type="project" value="UniProtKB-UniRule"/>
</dbReference>
<dbReference type="GO" id="GO:0000105">
    <property type="term" value="P:L-histidine biosynthetic process"/>
    <property type="evidence" value="ECO:0007669"/>
    <property type="project" value="InterPro"/>
</dbReference>
<dbReference type="CDD" id="cd00773">
    <property type="entry name" value="HisRS-like_core"/>
    <property type="match status" value="1"/>
</dbReference>
<dbReference type="FunFam" id="3.30.930.10:FF:000121">
    <property type="entry name" value="Histidine--tRNA ligase"/>
    <property type="match status" value="1"/>
</dbReference>
<dbReference type="Gene3D" id="3.40.50.800">
    <property type="entry name" value="Anticodon-binding domain"/>
    <property type="match status" value="1"/>
</dbReference>
<dbReference type="Gene3D" id="3.30.930.10">
    <property type="entry name" value="Bira Bifunctional Protein, Domain 2"/>
    <property type="match status" value="1"/>
</dbReference>
<dbReference type="HAMAP" id="MF_00127">
    <property type="entry name" value="His_tRNA_synth"/>
    <property type="match status" value="1"/>
</dbReference>
<dbReference type="HAMAP" id="MF_00125">
    <property type="entry name" value="HisZ"/>
    <property type="match status" value="1"/>
</dbReference>
<dbReference type="InterPro" id="IPR006195">
    <property type="entry name" value="aa-tRNA-synth_II"/>
</dbReference>
<dbReference type="InterPro" id="IPR045864">
    <property type="entry name" value="aa-tRNA-synth_II/BPL/LPL"/>
</dbReference>
<dbReference type="InterPro" id="IPR004154">
    <property type="entry name" value="Anticodon-bd"/>
</dbReference>
<dbReference type="InterPro" id="IPR036621">
    <property type="entry name" value="Anticodon-bd_dom_sf"/>
</dbReference>
<dbReference type="InterPro" id="IPR015807">
    <property type="entry name" value="His-tRNA-ligase"/>
</dbReference>
<dbReference type="InterPro" id="IPR041715">
    <property type="entry name" value="HisRS-like_core"/>
</dbReference>
<dbReference type="InterPro" id="IPR004516">
    <property type="entry name" value="HisRS/HisZ"/>
</dbReference>
<dbReference type="InterPro" id="IPR004517">
    <property type="entry name" value="HisZ"/>
</dbReference>
<dbReference type="NCBIfam" id="TIGR00442">
    <property type="entry name" value="hisS"/>
    <property type="match status" value="1"/>
</dbReference>
<dbReference type="PANTHER" id="PTHR43707:SF1">
    <property type="entry name" value="HISTIDINE--TRNA LIGASE, MITOCHONDRIAL-RELATED"/>
    <property type="match status" value="1"/>
</dbReference>
<dbReference type="PANTHER" id="PTHR43707">
    <property type="entry name" value="HISTIDYL-TRNA SYNTHETASE"/>
    <property type="match status" value="1"/>
</dbReference>
<dbReference type="Pfam" id="PF03129">
    <property type="entry name" value="HGTP_anticodon"/>
    <property type="match status" value="1"/>
</dbReference>
<dbReference type="Pfam" id="PF13393">
    <property type="entry name" value="tRNA-synt_His"/>
    <property type="match status" value="1"/>
</dbReference>
<dbReference type="PIRSF" id="PIRSF001549">
    <property type="entry name" value="His-tRNA_synth"/>
    <property type="match status" value="1"/>
</dbReference>
<dbReference type="SUPFAM" id="SSF52954">
    <property type="entry name" value="Class II aaRS ABD-related"/>
    <property type="match status" value="1"/>
</dbReference>
<dbReference type="SUPFAM" id="SSF55681">
    <property type="entry name" value="Class II aaRS and biotin synthetases"/>
    <property type="match status" value="1"/>
</dbReference>
<dbReference type="PROSITE" id="PS50862">
    <property type="entry name" value="AA_TRNA_LIGASE_II"/>
    <property type="match status" value="1"/>
</dbReference>
<protein>
    <recommendedName>
        <fullName evidence="1">Histidine--tRNA ligase</fullName>
        <ecNumber evidence="1">6.1.1.21</ecNumber>
    </recommendedName>
    <alternativeName>
        <fullName evidence="1">Histidyl-tRNA synthetase</fullName>
        <shortName evidence="1">HisRS</shortName>
    </alternativeName>
</protein>
<feature type="chain" id="PRO_1000203150" description="Histidine--tRNA ligase">
    <location>
        <begin position="1"/>
        <end position="426"/>
    </location>
</feature>
<reference key="1">
    <citation type="journal article" date="2009" name="Proc. Natl. Acad. Sci. U.S.A.">
        <title>Biogeography of the Sulfolobus islandicus pan-genome.</title>
        <authorList>
            <person name="Reno M.L."/>
            <person name="Held N.L."/>
            <person name="Fields C.J."/>
            <person name="Burke P.V."/>
            <person name="Whitaker R.J."/>
        </authorList>
    </citation>
    <scope>NUCLEOTIDE SEQUENCE [LARGE SCALE GENOMIC DNA]</scope>
    <source>
        <strain>L.S.2.15 / Lassen #1</strain>
    </source>
</reference>
<keyword id="KW-0030">Aminoacyl-tRNA synthetase</keyword>
<keyword id="KW-0067">ATP-binding</keyword>
<keyword id="KW-0963">Cytoplasm</keyword>
<keyword id="KW-0436">Ligase</keyword>
<keyword id="KW-0547">Nucleotide-binding</keyword>
<keyword id="KW-0648">Protein biosynthesis</keyword>
<organism>
    <name type="scientific">Saccharolobus islandicus (strain L.S.2.15 / Lassen #1)</name>
    <name type="common">Sulfolobus islandicus</name>
    <dbReference type="NCBI Taxonomy" id="429572"/>
    <lineage>
        <taxon>Archaea</taxon>
        <taxon>Thermoproteota</taxon>
        <taxon>Thermoprotei</taxon>
        <taxon>Sulfolobales</taxon>
        <taxon>Sulfolobaceae</taxon>
        <taxon>Saccharolobus</taxon>
    </lineage>
</organism>
<proteinExistence type="inferred from homology"/>